<evidence type="ECO:0000250" key="1"/>
<evidence type="ECO:0000255" key="2">
    <source>
        <dbReference type="PROSITE-ProRule" id="PRU00214"/>
    </source>
</evidence>
<evidence type="ECO:0000305" key="3"/>
<dbReference type="EMBL" id="AY227756">
    <property type="protein sequence ID" value="AAP55510.1"/>
    <property type="molecule type" value="mRNA"/>
</dbReference>
<dbReference type="EMBL" id="CH473973">
    <property type="protein sequence ID" value="EDM13919.1"/>
    <property type="molecule type" value="Genomic_DNA"/>
</dbReference>
<dbReference type="RefSeq" id="NP_001009681.1">
    <property type="nucleotide sequence ID" value="NM_001009681.1"/>
</dbReference>
<dbReference type="SMR" id="G3V645"/>
<dbReference type="FunCoup" id="G3V645">
    <property type="interactions" value="14"/>
</dbReference>
<dbReference type="STRING" id="10116.ENSRNOP00000001570"/>
<dbReference type="iPTMnet" id="G3V645"/>
<dbReference type="PhosphoSitePlus" id="G3V645"/>
<dbReference type="PaxDb" id="10116-ENSRNOP00000001570"/>
<dbReference type="Ensembl" id="ENSRNOT00000001570.5">
    <property type="protein sequence ID" value="ENSRNOP00000001570.3"/>
    <property type="gene ID" value="ENSRNOG00000001187.6"/>
</dbReference>
<dbReference type="GeneID" id="304545"/>
<dbReference type="KEGG" id="rno:304545"/>
<dbReference type="UCSC" id="RGD:1308586">
    <property type="organism name" value="rat"/>
</dbReference>
<dbReference type="AGR" id="RGD:1308586"/>
<dbReference type="CTD" id="8638"/>
<dbReference type="RGD" id="1308586">
    <property type="gene designation" value="Oasl"/>
</dbReference>
<dbReference type="eggNOG" id="KOG0001">
    <property type="taxonomic scope" value="Eukaryota"/>
</dbReference>
<dbReference type="GeneTree" id="ENSGT00510000046406"/>
<dbReference type="HOGENOM" id="CLU_040930_1_0_1"/>
<dbReference type="InParanoid" id="G3V645"/>
<dbReference type="OMA" id="VICIYWT"/>
<dbReference type="OrthoDB" id="24937at9989"/>
<dbReference type="PhylomeDB" id="G3V645"/>
<dbReference type="TreeFam" id="TF329749"/>
<dbReference type="Reactome" id="R-RNO-8983711">
    <property type="pathway name" value="OAS antiviral response"/>
</dbReference>
<dbReference type="PRO" id="PR:G3V645"/>
<dbReference type="Proteomes" id="UP000002494">
    <property type="component" value="Chromosome 12"/>
</dbReference>
<dbReference type="Proteomes" id="UP000234681">
    <property type="component" value="Chromosome 12"/>
</dbReference>
<dbReference type="Bgee" id="ENSRNOG00000001187">
    <property type="expression patterns" value="Expressed in stomach and 16 other cell types or tissues"/>
</dbReference>
<dbReference type="GO" id="GO:0005737">
    <property type="term" value="C:cytoplasm"/>
    <property type="evidence" value="ECO:0000250"/>
    <property type="project" value="UniProtKB"/>
</dbReference>
<dbReference type="GO" id="GO:0005829">
    <property type="term" value="C:cytosol"/>
    <property type="evidence" value="ECO:0000318"/>
    <property type="project" value="GO_Central"/>
</dbReference>
<dbReference type="GO" id="GO:0016020">
    <property type="term" value="C:membrane"/>
    <property type="evidence" value="ECO:0000318"/>
    <property type="project" value="GO_Central"/>
</dbReference>
<dbReference type="GO" id="GO:0005730">
    <property type="term" value="C:nucleolus"/>
    <property type="evidence" value="ECO:0000250"/>
    <property type="project" value="UniProtKB"/>
</dbReference>
<dbReference type="GO" id="GO:0005654">
    <property type="term" value="C:nucleoplasm"/>
    <property type="evidence" value="ECO:0000318"/>
    <property type="project" value="GO_Central"/>
</dbReference>
<dbReference type="GO" id="GO:0003677">
    <property type="term" value="F:DNA binding"/>
    <property type="evidence" value="ECO:0000250"/>
    <property type="project" value="UniProtKB"/>
</dbReference>
<dbReference type="GO" id="GO:0003725">
    <property type="term" value="F:double-stranded RNA binding"/>
    <property type="evidence" value="ECO:0000250"/>
    <property type="project" value="UniProtKB"/>
</dbReference>
<dbReference type="GO" id="GO:0016779">
    <property type="term" value="F:nucleotidyltransferase activity"/>
    <property type="evidence" value="ECO:0007669"/>
    <property type="project" value="InterPro"/>
</dbReference>
<dbReference type="GO" id="GO:0140374">
    <property type="term" value="P:antiviral innate immune response"/>
    <property type="evidence" value="ECO:0000318"/>
    <property type="project" value="GO_Central"/>
</dbReference>
<dbReference type="GO" id="GO:0070106">
    <property type="term" value="P:interleukin-27-mediated signaling pathway"/>
    <property type="evidence" value="ECO:0000266"/>
    <property type="project" value="RGD"/>
</dbReference>
<dbReference type="GO" id="GO:0045071">
    <property type="term" value="P:negative regulation of viral genome replication"/>
    <property type="evidence" value="ECO:0000266"/>
    <property type="project" value="RGD"/>
</dbReference>
<dbReference type="GO" id="GO:1900246">
    <property type="term" value="P:positive regulation of RIG-I signaling pathway"/>
    <property type="evidence" value="ECO:0000266"/>
    <property type="project" value="RGD"/>
</dbReference>
<dbReference type="GO" id="GO:0009615">
    <property type="term" value="P:response to virus"/>
    <property type="evidence" value="ECO:0000250"/>
    <property type="project" value="UniProtKB"/>
</dbReference>
<dbReference type="GO" id="GO:0060337">
    <property type="term" value="P:type I interferon-mediated signaling pathway"/>
    <property type="evidence" value="ECO:0000318"/>
    <property type="project" value="GO_Central"/>
</dbReference>
<dbReference type="CDD" id="cd05400">
    <property type="entry name" value="NT_2-5OAS_ClassI-CCAase"/>
    <property type="match status" value="1"/>
</dbReference>
<dbReference type="CDD" id="cd01811">
    <property type="entry name" value="Ubl1_OASL"/>
    <property type="match status" value="1"/>
</dbReference>
<dbReference type="FunFam" id="3.10.20.90:FF:000205">
    <property type="entry name" value="2'-5'-oligoadenylate synthase-like protein 2"/>
    <property type="match status" value="1"/>
</dbReference>
<dbReference type="FunFam" id="1.10.1410.20:FF:000001">
    <property type="entry name" value="2'-5'-oligoadenylate synthetase 1"/>
    <property type="match status" value="1"/>
</dbReference>
<dbReference type="FunFam" id="3.30.460.10:FF:000007">
    <property type="entry name" value="2'-5'-oligoadenylate synthetase 1"/>
    <property type="match status" value="1"/>
</dbReference>
<dbReference type="Gene3D" id="1.10.1410.20">
    <property type="entry name" value="2'-5'-oligoadenylate synthetase 1, domain 2"/>
    <property type="match status" value="1"/>
</dbReference>
<dbReference type="Gene3D" id="3.30.460.10">
    <property type="entry name" value="Beta Polymerase, domain 2"/>
    <property type="match status" value="1"/>
</dbReference>
<dbReference type="Gene3D" id="3.10.20.90">
    <property type="entry name" value="Phosphatidylinositol 3-kinase Catalytic Subunit, Chain A, domain 1"/>
    <property type="match status" value="1"/>
</dbReference>
<dbReference type="InterPro" id="IPR018952">
    <property type="entry name" value="2-5-oligoAdlate_synth_1_dom2/C"/>
</dbReference>
<dbReference type="InterPro" id="IPR006117">
    <property type="entry name" value="2-5OAS_C_CS"/>
</dbReference>
<dbReference type="InterPro" id="IPR006116">
    <property type="entry name" value="NT_2-5OAS_ClassI-CCAase"/>
</dbReference>
<dbReference type="InterPro" id="IPR043519">
    <property type="entry name" value="NT_sf"/>
</dbReference>
<dbReference type="InterPro" id="IPR000626">
    <property type="entry name" value="Ubiquitin-like_dom"/>
</dbReference>
<dbReference type="InterPro" id="IPR029071">
    <property type="entry name" value="Ubiquitin-like_domsf"/>
</dbReference>
<dbReference type="PANTHER" id="PTHR11258:SF16">
    <property type="entry name" value="2'-5'-OLIGOADENYLATE SYNTHASE-LIKE PROTEIN"/>
    <property type="match status" value="1"/>
</dbReference>
<dbReference type="PANTHER" id="PTHR11258">
    <property type="entry name" value="2-5 OLIGOADENYLATE SYNTHETASE"/>
    <property type="match status" value="1"/>
</dbReference>
<dbReference type="Pfam" id="PF10421">
    <property type="entry name" value="OAS1_C"/>
    <property type="match status" value="1"/>
</dbReference>
<dbReference type="Pfam" id="PF00240">
    <property type="entry name" value="ubiquitin"/>
    <property type="match status" value="1"/>
</dbReference>
<dbReference type="SMART" id="SM00213">
    <property type="entry name" value="UBQ"/>
    <property type="match status" value="2"/>
</dbReference>
<dbReference type="SUPFAM" id="SSF81301">
    <property type="entry name" value="Nucleotidyltransferase"/>
    <property type="match status" value="1"/>
</dbReference>
<dbReference type="SUPFAM" id="SSF81631">
    <property type="entry name" value="PAP/OAS1 substrate-binding domain"/>
    <property type="match status" value="1"/>
</dbReference>
<dbReference type="SUPFAM" id="SSF54236">
    <property type="entry name" value="Ubiquitin-like"/>
    <property type="match status" value="2"/>
</dbReference>
<dbReference type="PROSITE" id="PS00833">
    <property type="entry name" value="25A_SYNTH_2"/>
    <property type="match status" value="1"/>
</dbReference>
<dbReference type="PROSITE" id="PS50152">
    <property type="entry name" value="25A_SYNTH_3"/>
    <property type="match status" value="1"/>
</dbReference>
<dbReference type="PROSITE" id="PS50053">
    <property type="entry name" value="UBIQUITIN_2"/>
    <property type="match status" value="1"/>
</dbReference>
<reference key="1">
    <citation type="journal article" date="2006" name="J. Mol. Evol.">
        <title>The mammalian 2'-5' oligoadenylate synthetase gene family: evidence for concerted evolution of paralogous Oas1 genes in Rodentia and Artiodactyla.</title>
        <authorList>
            <person name="Perelygin A.A."/>
            <person name="Zharkikh A.A."/>
            <person name="Scherbik S.V."/>
            <person name="Brinton M.A."/>
        </authorList>
    </citation>
    <scope>NUCLEOTIDE SEQUENCE [MRNA]</scope>
    <source>
        <strain>Sprague-Dawley</strain>
        <tissue>Ovary</tissue>
    </source>
</reference>
<reference key="2">
    <citation type="submission" date="2005-07" db="EMBL/GenBank/DDBJ databases">
        <authorList>
            <person name="Mural R.J."/>
            <person name="Adams M.D."/>
            <person name="Myers E.W."/>
            <person name="Smith H.O."/>
            <person name="Venter J.C."/>
        </authorList>
    </citation>
    <scope>NUCLEOTIDE SEQUENCE [LARGE SCALE GENOMIC DNA]</scope>
</reference>
<comment type="function">
    <text evidence="1">Does not have 2'-5'-OAS activity, but can bind double-stranded RNA. Displays antiviral activity via an alternative antiviral pathway independent of RNase L (By similarity).</text>
</comment>
<comment type="subunit">
    <text evidence="1">Specifically interacts with the ligand binding domain of the thyroid receptor (TR). TRIP14 does not require the presence of thyroid hormone for its interaction. Binds MBD1 (By similarity).</text>
</comment>
<comment type="subcellular location">
    <subcellularLocation>
        <location evidence="1">Nucleus</location>
        <location evidence="1">Nucleolus</location>
    </subcellularLocation>
    <subcellularLocation>
        <location evidence="1">Cytoplasm</location>
    </subcellularLocation>
</comment>
<comment type="similarity">
    <text evidence="3">Belongs to the 2-5A synthase family.</text>
</comment>
<sequence>MAVAQELYSFPASKLDSFVAQWLQPTREWKEEVLETVQTVEQFLRQENFRGERGPAQDVRVLKVLKVGCFGNGTVLRSTTDVELVVFLSCFHSFQEEAKHHQAVLRLIQKRMSYCRDLLDLGLSNLSVIEEVPSSLIFTIQTRETWEPITVTIVPAFRALGPSCPNSAEVYVNLIKANGYPGNFSPSFSELQRSFVKHRPTKLKSLLRLVKHWYQQYVRDKCPRANLPPLYALELLTVYAWEAGTQEDSNFRLDEGLATVMELLQDHELLCIYWTKYYTLQHPVIERFVRRQLKGERPIILDPADPTHNVAQGYRWDIVAQRASQCLKQDCCYDDRDAPVPSWTVKRAPDIQVTVQQWGHPDLILWVNPYEPIKKLKEKIRLSRGYSGLQRLSFQEPGGQRQLIRSQCSLAYYGIFCDTQICLLDTISPEIQVFVKNPDGGSHAYAIHPLDFVLSLKQQIEDRQGLQSQEQQLEFQGRVLEDWFDFKSYGIQDSITIILSRKREGKAPSAPS</sequence>
<feature type="chain" id="PRO_0000418633" description="2'-5'-oligoadenylate synthase-like protein 1">
    <location>
        <begin position="1"/>
        <end position="512"/>
    </location>
</feature>
<feature type="domain" description="Ubiquitin-like 1" evidence="2">
    <location>
        <begin position="351"/>
        <end position="430"/>
    </location>
</feature>
<feature type="domain" description="Ubiquitin-like 2" evidence="2">
    <location>
        <begin position="431"/>
        <end position="507"/>
    </location>
</feature>
<feature type="sequence conflict" description="In Ref. 1; AAP55510." evidence="3" ref="1">
    <original>D</original>
    <variation>Y</variation>
    <location>
        <position position="350"/>
    </location>
</feature>
<accession>G3V645</accession>
<accession>Q5MYW3</accession>
<protein>
    <recommendedName>
        <fullName>2'-5'-oligoadenylate synthase-like protein 1</fullName>
    </recommendedName>
</protein>
<organism>
    <name type="scientific">Rattus norvegicus</name>
    <name type="common">Rat</name>
    <dbReference type="NCBI Taxonomy" id="10116"/>
    <lineage>
        <taxon>Eukaryota</taxon>
        <taxon>Metazoa</taxon>
        <taxon>Chordata</taxon>
        <taxon>Craniata</taxon>
        <taxon>Vertebrata</taxon>
        <taxon>Euteleostomi</taxon>
        <taxon>Mammalia</taxon>
        <taxon>Eutheria</taxon>
        <taxon>Euarchontoglires</taxon>
        <taxon>Glires</taxon>
        <taxon>Rodentia</taxon>
        <taxon>Myomorpha</taxon>
        <taxon>Muroidea</taxon>
        <taxon>Muridae</taxon>
        <taxon>Murinae</taxon>
        <taxon>Rattus</taxon>
    </lineage>
</organism>
<keyword id="KW-0051">Antiviral defense</keyword>
<keyword id="KW-0963">Cytoplasm</keyword>
<keyword id="KW-0391">Immunity</keyword>
<keyword id="KW-0399">Innate immunity</keyword>
<keyword id="KW-0539">Nucleus</keyword>
<keyword id="KW-1185">Reference proteome</keyword>
<keyword id="KW-0677">Repeat</keyword>
<keyword id="KW-0694">RNA-binding</keyword>
<proteinExistence type="evidence at transcript level"/>
<gene>
    <name type="primary">Oasl</name>
</gene>
<name>OASL1_RAT</name>